<keyword id="KW-0378">Hydrolase</keyword>
<keyword id="KW-0464">Manganese</keyword>
<keyword id="KW-0479">Metal-binding</keyword>
<keyword id="KW-0620">Polyamine biosynthesis</keyword>
<keyword id="KW-0661">Putrescine biosynthesis</keyword>
<keyword id="KW-1185">Reference proteome</keyword>
<keyword id="KW-0745">Spermidine biosynthesis</keyword>
<evidence type="ECO:0000250" key="1"/>
<evidence type="ECO:0000255" key="2">
    <source>
        <dbReference type="PROSITE-ProRule" id="PRU00742"/>
    </source>
</evidence>
<organism>
    <name type="scientific">Bacillus cereus (strain ATCC 14579 / DSM 31 / CCUG 7414 / JCM 2152 / NBRC 15305 / NCIMB 9373 / NCTC 2599 / NRRL B-3711)</name>
    <dbReference type="NCBI Taxonomy" id="226900"/>
    <lineage>
        <taxon>Bacteria</taxon>
        <taxon>Bacillati</taxon>
        <taxon>Bacillota</taxon>
        <taxon>Bacilli</taxon>
        <taxon>Bacillales</taxon>
        <taxon>Bacillaceae</taxon>
        <taxon>Bacillus</taxon>
        <taxon>Bacillus cereus group</taxon>
    </lineage>
</organism>
<feature type="chain" id="PRO_0000173726" description="Agmatinase">
    <location>
        <begin position="1"/>
        <end position="290"/>
    </location>
</feature>
<feature type="binding site" evidence="2">
    <location>
        <position position="112"/>
    </location>
    <ligand>
        <name>Mn(2+)</name>
        <dbReference type="ChEBI" id="CHEBI:29035"/>
    </ligand>
</feature>
<feature type="binding site" evidence="2">
    <location>
        <position position="135"/>
    </location>
    <ligand>
        <name>Mn(2+)</name>
        <dbReference type="ChEBI" id="CHEBI:29035"/>
    </ligand>
</feature>
<feature type="binding site" evidence="2">
    <location>
        <position position="137"/>
    </location>
    <ligand>
        <name>Mn(2+)</name>
        <dbReference type="ChEBI" id="CHEBI:29035"/>
    </ligand>
</feature>
<feature type="binding site" evidence="2">
    <location>
        <position position="139"/>
    </location>
    <ligand>
        <name>Mn(2+)</name>
        <dbReference type="ChEBI" id="CHEBI:29035"/>
    </ligand>
</feature>
<feature type="binding site" evidence="2">
    <location>
        <position position="216"/>
    </location>
    <ligand>
        <name>Mn(2+)</name>
        <dbReference type="ChEBI" id="CHEBI:29035"/>
    </ligand>
</feature>
<feature type="binding site" evidence="2">
    <location>
        <position position="218"/>
    </location>
    <ligand>
        <name>Mn(2+)</name>
        <dbReference type="ChEBI" id="CHEBI:29035"/>
    </ligand>
</feature>
<gene>
    <name type="primary">speB</name>
    <name type="ordered locus">BC_5370</name>
</gene>
<accession>Q814Q2</accession>
<reference key="1">
    <citation type="journal article" date="2003" name="Nature">
        <title>Genome sequence of Bacillus cereus and comparative analysis with Bacillus anthracis.</title>
        <authorList>
            <person name="Ivanova N."/>
            <person name="Sorokin A."/>
            <person name="Anderson I."/>
            <person name="Galleron N."/>
            <person name="Candelon B."/>
            <person name="Kapatral V."/>
            <person name="Bhattacharyya A."/>
            <person name="Reznik G."/>
            <person name="Mikhailova N."/>
            <person name="Lapidus A."/>
            <person name="Chu L."/>
            <person name="Mazur M."/>
            <person name="Goltsman E."/>
            <person name="Larsen N."/>
            <person name="D'Souza M."/>
            <person name="Walunas T."/>
            <person name="Grechkin Y."/>
            <person name="Pusch G."/>
            <person name="Haselkorn R."/>
            <person name="Fonstein M."/>
            <person name="Ehrlich S.D."/>
            <person name="Overbeek R."/>
            <person name="Kyrpides N.C."/>
        </authorList>
    </citation>
    <scope>NUCLEOTIDE SEQUENCE [LARGE SCALE GENOMIC DNA]</scope>
    <source>
        <strain>ATCC 14579 / DSM 31 / CCUG 7414 / JCM 2152 / NBRC 15305 / NCIMB 9373 / NCTC 2599 / NRRL B-3711</strain>
    </source>
</reference>
<protein>
    <recommendedName>
        <fullName>Agmatinase</fullName>
        <ecNumber>3.5.3.11</ecNumber>
    </recommendedName>
    <alternativeName>
        <fullName>Agmatine ureohydrolase</fullName>
        <shortName>AUH</shortName>
    </alternativeName>
</protein>
<proteinExistence type="inferred from homology"/>
<dbReference type="EC" id="3.5.3.11"/>
<dbReference type="EMBL" id="AE016877">
    <property type="protein sequence ID" value="AAP12232.1"/>
    <property type="molecule type" value="Genomic_DNA"/>
</dbReference>
<dbReference type="RefSeq" id="NP_835031.1">
    <property type="nucleotide sequence ID" value="NC_004722.1"/>
</dbReference>
<dbReference type="RefSeq" id="WP_001209831.1">
    <property type="nucleotide sequence ID" value="NZ_CP138336.1"/>
</dbReference>
<dbReference type="SMR" id="Q814Q2"/>
<dbReference type="STRING" id="226900.BC_5370"/>
<dbReference type="GeneID" id="93005754"/>
<dbReference type="KEGG" id="bce:BC5370"/>
<dbReference type="PATRIC" id="fig|226900.8.peg.5545"/>
<dbReference type="HOGENOM" id="CLU_039478_0_2_9"/>
<dbReference type="OrthoDB" id="9788689at2"/>
<dbReference type="UniPathway" id="UPA00534">
    <property type="reaction ID" value="UER00287"/>
</dbReference>
<dbReference type="Proteomes" id="UP000001417">
    <property type="component" value="Chromosome"/>
</dbReference>
<dbReference type="GO" id="GO:0008783">
    <property type="term" value="F:agmatinase activity"/>
    <property type="evidence" value="ECO:0000318"/>
    <property type="project" value="GO_Central"/>
</dbReference>
<dbReference type="GO" id="GO:0046872">
    <property type="term" value="F:metal ion binding"/>
    <property type="evidence" value="ECO:0007669"/>
    <property type="project" value="UniProtKB-KW"/>
</dbReference>
<dbReference type="GO" id="GO:0033389">
    <property type="term" value="P:putrescine biosynthetic process from arginine, via agmatine"/>
    <property type="evidence" value="ECO:0000318"/>
    <property type="project" value="GO_Central"/>
</dbReference>
<dbReference type="GO" id="GO:0008295">
    <property type="term" value="P:spermidine biosynthetic process"/>
    <property type="evidence" value="ECO:0007669"/>
    <property type="project" value="UniProtKB-KW"/>
</dbReference>
<dbReference type="CDD" id="cd11593">
    <property type="entry name" value="Agmatinase-like_2"/>
    <property type="match status" value="1"/>
</dbReference>
<dbReference type="FunFam" id="3.40.800.10:FF:000004">
    <property type="entry name" value="Agmatinase"/>
    <property type="match status" value="1"/>
</dbReference>
<dbReference type="Gene3D" id="3.40.800.10">
    <property type="entry name" value="Ureohydrolase domain"/>
    <property type="match status" value="1"/>
</dbReference>
<dbReference type="InterPro" id="IPR005925">
    <property type="entry name" value="Agmatinase-rel"/>
</dbReference>
<dbReference type="InterPro" id="IPR006035">
    <property type="entry name" value="Ureohydrolase"/>
</dbReference>
<dbReference type="InterPro" id="IPR023696">
    <property type="entry name" value="Ureohydrolase_dom_sf"/>
</dbReference>
<dbReference type="InterPro" id="IPR020855">
    <property type="entry name" value="Ureohydrolase_Mn_BS"/>
</dbReference>
<dbReference type="NCBIfam" id="TIGR01230">
    <property type="entry name" value="agmatinase"/>
    <property type="match status" value="1"/>
</dbReference>
<dbReference type="PANTHER" id="PTHR11358">
    <property type="entry name" value="ARGINASE/AGMATINASE"/>
    <property type="match status" value="1"/>
</dbReference>
<dbReference type="PANTHER" id="PTHR11358:SF26">
    <property type="entry name" value="GUANIDINO ACID HYDROLASE, MITOCHONDRIAL"/>
    <property type="match status" value="1"/>
</dbReference>
<dbReference type="Pfam" id="PF00491">
    <property type="entry name" value="Arginase"/>
    <property type="match status" value="1"/>
</dbReference>
<dbReference type="PIRSF" id="PIRSF036979">
    <property type="entry name" value="Arginase"/>
    <property type="match status" value="1"/>
</dbReference>
<dbReference type="SUPFAM" id="SSF52768">
    <property type="entry name" value="Arginase/deacetylase"/>
    <property type="match status" value="1"/>
</dbReference>
<dbReference type="PROSITE" id="PS01053">
    <property type="entry name" value="ARGINASE_1"/>
    <property type="match status" value="1"/>
</dbReference>
<dbReference type="PROSITE" id="PS51409">
    <property type="entry name" value="ARGINASE_2"/>
    <property type="match status" value="1"/>
</dbReference>
<name>SPEB_BACCR</name>
<comment type="function">
    <text evidence="1">Catalyzes the formation of putrescine from agmatine.</text>
</comment>
<comment type="catalytic activity">
    <reaction>
        <text>agmatine + H2O = urea + putrescine</text>
        <dbReference type="Rhea" id="RHEA:13929"/>
        <dbReference type="ChEBI" id="CHEBI:15377"/>
        <dbReference type="ChEBI" id="CHEBI:16199"/>
        <dbReference type="ChEBI" id="CHEBI:58145"/>
        <dbReference type="ChEBI" id="CHEBI:326268"/>
        <dbReference type="EC" id="3.5.3.11"/>
    </reaction>
</comment>
<comment type="cofactor">
    <cofactor evidence="2">
        <name>Mn(2+)</name>
        <dbReference type="ChEBI" id="CHEBI:29035"/>
    </cofactor>
</comment>
<comment type="pathway">
    <text>Amine and polyamine biosynthesis; putrescine biosynthesis via agmatine pathway; putrescine from agmatine: step 1/1.</text>
</comment>
<comment type="similarity">
    <text evidence="2">Belongs to the arginase family. Agmatinase subfamily.</text>
</comment>
<sequence length="290" mass="32389">MRFDEAYSGKVFIKSHPSFEESKVVIYGMPMDWTVSYRPGSRFGPARIREVSIGLEEYSPYLDRELEEVKYFDAGDIPLPFGNAQRSLDMIEEYVSKLLDADKFPLGLGGEHLVSWPIFKAMAKKYPDLAIIHMDAHTDLRESYEGEPLSHSTPIRKVCDLIGPENVYSFGIRSGMKEEFEWAKEVGMNLYKFDVLEPLKEVLPKLAGRPVYVTIDIDVLDPAHAPGTGTLEAGGITSKELLDSIVAIANSNINVVGADLVEVAPVYDHSDQTPVAASKFVREMLLGWVK</sequence>